<dbReference type="EMBL" id="M60451">
    <property type="protein sequence ID" value="AAA61276.1"/>
    <property type="molecule type" value="mRNA"/>
</dbReference>
<dbReference type="EMBL" id="M55513">
    <property type="protein sequence ID" value="AAA36422.1"/>
    <property type="molecule type" value="mRNA"/>
</dbReference>
<dbReference type="EMBL" id="M83254">
    <property type="protein sequence ID" value="AAA60146.1"/>
    <property type="status" value="ALT_FRAME"/>
    <property type="molecule type" value="mRNA"/>
</dbReference>
<dbReference type="EMBL" id="BC096357">
    <property type="protein sequence ID" value="AAH96357.1"/>
    <property type="molecule type" value="mRNA"/>
</dbReference>
<dbReference type="EMBL" id="BC096358">
    <property type="protein sequence ID" value="AAH96358.3"/>
    <property type="molecule type" value="mRNA"/>
</dbReference>
<dbReference type="EMBL" id="BC099665">
    <property type="protein sequence ID" value="AAH99665.3"/>
    <property type="molecule type" value="mRNA"/>
</dbReference>
<dbReference type="EMBL" id="BC099666">
    <property type="protein sequence ID" value="AAH99666.3"/>
    <property type="molecule type" value="mRNA"/>
</dbReference>
<dbReference type="CCDS" id="CCDS8536.1">
    <molecule id="P22460-1"/>
</dbReference>
<dbReference type="PIR" id="A56031">
    <property type="entry name" value="A56031"/>
</dbReference>
<dbReference type="RefSeq" id="NP_002225.2">
    <molecule id="P22460-1"/>
    <property type="nucleotide sequence ID" value="NM_002234.3"/>
</dbReference>
<dbReference type="SMR" id="P22460"/>
<dbReference type="BioGRID" id="109943">
    <property type="interactions" value="81"/>
</dbReference>
<dbReference type="CORUM" id="P22460"/>
<dbReference type="DIP" id="DIP-42010N"/>
<dbReference type="FunCoup" id="P22460">
    <property type="interactions" value="51"/>
</dbReference>
<dbReference type="IntAct" id="P22460">
    <property type="interactions" value="39"/>
</dbReference>
<dbReference type="MINT" id="P22460"/>
<dbReference type="STRING" id="9606.ENSP00000252321"/>
<dbReference type="BindingDB" id="P22460"/>
<dbReference type="ChEMBL" id="CHEMBL4306"/>
<dbReference type="DrugBank" id="DB15047">
    <property type="generic name" value="BMS-919373"/>
</dbReference>
<dbReference type="DrugBank" id="DB06637">
    <property type="generic name" value="Dalfampridine"/>
</dbReference>
<dbReference type="DrugBank" id="DB04855">
    <property type="generic name" value="Dronedarone"/>
</dbReference>
<dbReference type="DrugBank" id="DB00228">
    <property type="generic name" value="Enflurane"/>
</dbReference>
<dbReference type="DrugBank" id="DB11633">
    <property type="generic name" value="Isavuconazole"/>
</dbReference>
<dbReference type="DrugBank" id="DB01110">
    <property type="generic name" value="Miconazole"/>
</dbReference>
<dbReference type="DrugBank" id="DB01069">
    <property type="generic name" value="Promethazine"/>
</dbReference>
<dbReference type="DrugBank" id="DB08837">
    <property type="generic name" value="Tetraethylammonium"/>
</dbReference>
<dbReference type="DrugBank" id="DB06217">
    <property type="generic name" value="Vernakalant"/>
</dbReference>
<dbReference type="DrugCentral" id="P22460"/>
<dbReference type="GuidetoPHARMACOLOGY" id="542"/>
<dbReference type="TCDB" id="1.A.1.2.4">
    <property type="family name" value="the voltage-gated ion channel (vic) superfamily"/>
</dbReference>
<dbReference type="GlyGen" id="P22460">
    <property type="glycosylation" value="1 site"/>
</dbReference>
<dbReference type="iPTMnet" id="P22460"/>
<dbReference type="PhosphoSitePlus" id="P22460"/>
<dbReference type="SwissPalm" id="P22460"/>
<dbReference type="BioMuta" id="KCNA5"/>
<dbReference type="DMDM" id="146345443"/>
<dbReference type="MassIVE" id="P22460"/>
<dbReference type="PaxDb" id="9606-ENSP00000252321"/>
<dbReference type="PeptideAtlas" id="P22460"/>
<dbReference type="ProteomicsDB" id="53993">
    <molecule id="P22460-1"/>
</dbReference>
<dbReference type="ProteomicsDB" id="53994">
    <molecule id="P22460-2"/>
</dbReference>
<dbReference type="Antibodypedia" id="22318">
    <property type="antibodies" value="288 antibodies from 35 providers"/>
</dbReference>
<dbReference type="DNASU" id="3741"/>
<dbReference type="Ensembl" id="ENST00000252321.5">
    <molecule id="P22460-1"/>
    <property type="protein sequence ID" value="ENSP00000252321.3"/>
    <property type="gene ID" value="ENSG00000130037.5"/>
</dbReference>
<dbReference type="GeneID" id="3741"/>
<dbReference type="KEGG" id="hsa:3741"/>
<dbReference type="MANE-Select" id="ENST00000252321.5">
    <property type="protein sequence ID" value="ENSP00000252321.3"/>
    <property type="RefSeq nucleotide sequence ID" value="NM_002234.4"/>
    <property type="RefSeq protein sequence ID" value="NP_002225.2"/>
</dbReference>
<dbReference type="UCSC" id="uc001qni.5">
    <molecule id="P22460-1"/>
    <property type="organism name" value="human"/>
</dbReference>
<dbReference type="AGR" id="HGNC:6224"/>
<dbReference type="CTD" id="3741"/>
<dbReference type="DisGeNET" id="3741"/>
<dbReference type="GeneCards" id="KCNA5"/>
<dbReference type="HGNC" id="HGNC:6224">
    <property type="gene designation" value="KCNA5"/>
</dbReference>
<dbReference type="HPA" id="ENSG00000130037">
    <property type="expression patterns" value="Group enriched (choroid plexus, heart muscle)"/>
</dbReference>
<dbReference type="MalaCards" id="KCNA5"/>
<dbReference type="MIM" id="176267">
    <property type="type" value="gene"/>
</dbReference>
<dbReference type="MIM" id="612240">
    <property type="type" value="phenotype"/>
</dbReference>
<dbReference type="neXtProt" id="NX_P22460"/>
<dbReference type="OpenTargets" id="ENSG00000130037"/>
<dbReference type="Orphanet" id="334">
    <property type="disease" value="Familial atrial fibrillation"/>
</dbReference>
<dbReference type="PharmGKB" id="PA208"/>
<dbReference type="VEuPathDB" id="HostDB:ENSG00000130037"/>
<dbReference type="eggNOG" id="KOG1545">
    <property type="taxonomic scope" value="Eukaryota"/>
</dbReference>
<dbReference type="GeneTree" id="ENSGT00940000161860"/>
<dbReference type="HOGENOM" id="CLU_011722_4_0_1"/>
<dbReference type="InParanoid" id="P22460"/>
<dbReference type="OMA" id="PWKINDM"/>
<dbReference type="OrthoDB" id="415460at2759"/>
<dbReference type="PAN-GO" id="P22460">
    <property type="GO annotations" value="4 GO annotations based on evolutionary models"/>
</dbReference>
<dbReference type="PhylomeDB" id="P22460"/>
<dbReference type="TreeFam" id="TF313103"/>
<dbReference type="PathwayCommons" id="P22460"/>
<dbReference type="Reactome" id="R-HSA-1296072">
    <property type="pathway name" value="Voltage gated Potassium channels"/>
</dbReference>
<dbReference type="Reactome" id="R-HSA-5576890">
    <property type="pathway name" value="Phase 3 - rapid repolarisation"/>
</dbReference>
<dbReference type="SignaLink" id="P22460"/>
<dbReference type="SIGNOR" id="P22460"/>
<dbReference type="BioGRID-ORCS" id="3741">
    <property type="hits" value="12 hits in 1145 CRISPR screens"/>
</dbReference>
<dbReference type="GeneWiki" id="KCNA5"/>
<dbReference type="GenomeRNAi" id="3741"/>
<dbReference type="Pharos" id="P22460">
    <property type="development level" value="Tclin"/>
</dbReference>
<dbReference type="PRO" id="PR:P22460"/>
<dbReference type="Proteomes" id="UP000005640">
    <property type="component" value="Chromosome 12"/>
</dbReference>
<dbReference type="RNAct" id="P22460">
    <property type="molecule type" value="protein"/>
</dbReference>
<dbReference type="Bgee" id="ENSG00000130037">
    <property type="expression patterns" value="Expressed in cardiac muscle of right atrium and 139 other cell types or tissues"/>
</dbReference>
<dbReference type="GO" id="GO:0009986">
    <property type="term" value="C:cell surface"/>
    <property type="evidence" value="ECO:0000314"/>
    <property type="project" value="BHF-UCL"/>
</dbReference>
<dbReference type="GO" id="GO:0005794">
    <property type="term" value="C:Golgi apparatus"/>
    <property type="evidence" value="ECO:0007005"/>
    <property type="project" value="UniProtKB"/>
</dbReference>
<dbReference type="GO" id="GO:0014704">
    <property type="term" value="C:intercalated disc"/>
    <property type="evidence" value="ECO:0000314"/>
    <property type="project" value="BHF-UCL"/>
</dbReference>
<dbReference type="GO" id="GO:0046691">
    <property type="term" value="C:intracellular canaliculus"/>
    <property type="evidence" value="ECO:0007669"/>
    <property type="project" value="Ensembl"/>
</dbReference>
<dbReference type="GO" id="GO:0016020">
    <property type="term" value="C:membrane"/>
    <property type="evidence" value="ECO:0000318"/>
    <property type="project" value="GO_Central"/>
</dbReference>
<dbReference type="GO" id="GO:0045121">
    <property type="term" value="C:membrane raft"/>
    <property type="evidence" value="ECO:0000314"/>
    <property type="project" value="BHF-UCL"/>
</dbReference>
<dbReference type="GO" id="GO:0048471">
    <property type="term" value="C:perinuclear region of cytoplasm"/>
    <property type="evidence" value="ECO:0007669"/>
    <property type="project" value="Ensembl"/>
</dbReference>
<dbReference type="GO" id="GO:0005886">
    <property type="term" value="C:plasma membrane"/>
    <property type="evidence" value="ECO:0000314"/>
    <property type="project" value="UniProtKB"/>
</dbReference>
<dbReference type="GO" id="GO:0034705">
    <property type="term" value="C:potassium channel complex"/>
    <property type="evidence" value="ECO:0000314"/>
    <property type="project" value="UniProtKB"/>
</dbReference>
<dbReference type="GO" id="GO:0008076">
    <property type="term" value="C:voltage-gated potassium channel complex"/>
    <property type="evidence" value="ECO:0000314"/>
    <property type="project" value="BHF-UCL"/>
</dbReference>
<dbReference type="GO" id="GO:0030018">
    <property type="term" value="C:Z disc"/>
    <property type="evidence" value="ECO:0007669"/>
    <property type="project" value="Ensembl"/>
</dbReference>
<dbReference type="GO" id="GO:0051393">
    <property type="term" value="F:alpha-actinin binding"/>
    <property type="evidence" value="ECO:0000353"/>
    <property type="project" value="BHF-UCL"/>
</dbReference>
<dbReference type="GO" id="GO:0005251">
    <property type="term" value="F:delayed rectifier potassium channel activity"/>
    <property type="evidence" value="ECO:0000314"/>
    <property type="project" value="UniProtKB"/>
</dbReference>
<dbReference type="GO" id="GO:0015271">
    <property type="term" value="F:outward rectifier potassium channel activity"/>
    <property type="evidence" value="ECO:0000314"/>
    <property type="project" value="BHF-UCL"/>
</dbReference>
<dbReference type="GO" id="GO:0019901">
    <property type="term" value="F:protein kinase binding"/>
    <property type="evidence" value="ECO:0000353"/>
    <property type="project" value="BHF-UCL"/>
</dbReference>
<dbReference type="GO" id="GO:0097110">
    <property type="term" value="F:scaffold protein binding"/>
    <property type="evidence" value="ECO:0000353"/>
    <property type="project" value="BHF-UCL"/>
</dbReference>
<dbReference type="GO" id="GO:0005102">
    <property type="term" value="F:signaling receptor binding"/>
    <property type="evidence" value="ECO:0007669"/>
    <property type="project" value="Ensembl"/>
</dbReference>
<dbReference type="GO" id="GO:0005249">
    <property type="term" value="F:voltage-gated potassium channel activity"/>
    <property type="evidence" value="ECO:0000314"/>
    <property type="project" value="UniProtKB"/>
</dbReference>
<dbReference type="GO" id="GO:0086089">
    <property type="term" value="F:voltage-gated potassium channel activity involved in atrial cardiac muscle cell action potential repolarization"/>
    <property type="evidence" value="ECO:0000315"/>
    <property type="project" value="BHF-UCL"/>
</dbReference>
<dbReference type="GO" id="GO:0086087">
    <property type="term" value="F:voltage-gated potassium channel activity involved in bundle of His cell action potential repolarization"/>
    <property type="evidence" value="ECO:0000315"/>
    <property type="project" value="BHF-UCL"/>
</dbReference>
<dbReference type="GO" id="GO:0086090">
    <property type="term" value="F:voltage-gated potassium channel activity involved in SA node cell action potential repolarization"/>
    <property type="evidence" value="ECO:0000315"/>
    <property type="project" value="BHF-UCL"/>
</dbReference>
<dbReference type="GO" id="GO:0001508">
    <property type="term" value="P:action potential"/>
    <property type="evidence" value="ECO:0000318"/>
    <property type="project" value="GO_Central"/>
</dbReference>
<dbReference type="GO" id="GO:0086014">
    <property type="term" value="P:atrial cardiac muscle cell action potential"/>
    <property type="evidence" value="ECO:0000314"/>
    <property type="project" value="BHF-UCL"/>
</dbReference>
<dbReference type="GO" id="GO:0060081">
    <property type="term" value="P:membrane hyperpolarization"/>
    <property type="evidence" value="ECO:0000315"/>
    <property type="project" value="BHF-UCL"/>
</dbReference>
<dbReference type="GO" id="GO:0098914">
    <property type="term" value="P:membrane repolarization during atrial cardiac muscle cell action potential"/>
    <property type="evidence" value="ECO:0000315"/>
    <property type="project" value="BHF-UCL"/>
</dbReference>
<dbReference type="GO" id="GO:0086050">
    <property type="term" value="P:membrane repolarization during bundle of His cell action potential"/>
    <property type="evidence" value="ECO:0000315"/>
    <property type="project" value="BHF-UCL"/>
</dbReference>
<dbReference type="GO" id="GO:0086052">
    <property type="term" value="P:membrane repolarization during SA node cell action potential"/>
    <property type="evidence" value="ECO:0000315"/>
    <property type="project" value="BHF-UCL"/>
</dbReference>
<dbReference type="GO" id="GO:0051481">
    <property type="term" value="P:negative regulation of cytosolic calcium ion concentration"/>
    <property type="evidence" value="ECO:0007669"/>
    <property type="project" value="Ensembl"/>
</dbReference>
<dbReference type="GO" id="GO:0007219">
    <property type="term" value="P:Notch signaling pathway"/>
    <property type="evidence" value="ECO:0007669"/>
    <property type="project" value="Ensembl"/>
</dbReference>
<dbReference type="GO" id="GO:1900087">
    <property type="term" value="P:positive regulation of G1/S transition of mitotic cell cycle"/>
    <property type="evidence" value="ECO:0007669"/>
    <property type="project" value="Ensembl"/>
</dbReference>
<dbReference type="GO" id="GO:2000288">
    <property type="term" value="P:positive regulation of myoblast proliferation"/>
    <property type="evidence" value="ECO:0007669"/>
    <property type="project" value="Ensembl"/>
</dbReference>
<dbReference type="GO" id="GO:0097623">
    <property type="term" value="P:potassium ion export across plasma membrane"/>
    <property type="evidence" value="ECO:0000314"/>
    <property type="project" value="BHF-UCL"/>
</dbReference>
<dbReference type="GO" id="GO:0055075">
    <property type="term" value="P:potassium ion homeostasis"/>
    <property type="evidence" value="ECO:0007669"/>
    <property type="project" value="Ensembl"/>
</dbReference>
<dbReference type="GO" id="GO:0071805">
    <property type="term" value="P:potassium ion transmembrane transport"/>
    <property type="evidence" value="ECO:0000314"/>
    <property type="project" value="UniProtKB"/>
</dbReference>
<dbReference type="GO" id="GO:0006813">
    <property type="term" value="P:potassium ion transport"/>
    <property type="evidence" value="ECO:0000314"/>
    <property type="project" value="MGI"/>
</dbReference>
<dbReference type="GO" id="GO:0051260">
    <property type="term" value="P:protein homooligomerization"/>
    <property type="evidence" value="ECO:0007669"/>
    <property type="project" value="InterPro"/>
</dbReference>
<dbReference type="GO" id="GO:0060372">
    <property type="term" value="P:regulation of atrial cardiac muscle cell membrane repolarization"/>
    <property type="evidence" value="ECO:0000315"/>
    <property type="project" value="BHF-UCL"/>
</dbReference>
<dbReference type="GO" id="GO:0086091">
    <property type="term" value="P:regulation of heart rate by cardiac conduction"/>
    <property type="evidence" value="ECO:0000315"/>
    <property type="project" value="BHF-UCL"/>
</dbReference>
<dbReference type="GO" id="GO:0050796">
    <property type="term" value="P:regulation of insulin secretion"/>
    <property type="evidence" value="ECO:0000304"/>
    <property type="project" value="BHF-UCL"/>
</dbReference>
<dbReference type="GO" id="GO:0042391">
    <property type="term" value="P:regulation of membrane potential"/>
    <property type="evidence" value="ECO:0000314"/>
    <property type="project" value="BHF-UCL"/>
</dbReference>
<dbReference type="GO" id="GO:0019229">
    <property type="term" value="P:regulation of vasoconstriction"/>
    <property type="evidence" value="ECO:0007669"/>
    <property type="project" value="Ensembl"/>
</dbReference>
<dbReference type="GO" id="GO:0042542">
    <property type="term" value="P:response to hydrogen peroxide"/>
    <property type="evidence" value="ECO:0007669"/>
    <property type="project" value="Ensembl"/>
</dbReference>
<dbReference type="GO" id="GO:0055093">
    <property type="term" value="P:response to hyperoxia"/>
    <property type="evidence" value="ECO:0007669"/>
    <property type="project" value="Ensembl"/>
</dbReference>
<dbReference type="GO" id="GO:0001666">
    <property type="term" value="P:response to hypoxia"/>
    <property type="evidence" value="ECO:0007669"/>
    <property type="project" value="Ensembl"/>
</dbReference>
<dbReference type="GO" id="GO:0009612">
    <property type="term" value="P:response to mechanical stimulus"/>
    <property type="evidence" value="ECO:0007669"/>
    <property type="project" value="Ensembl"/>
</dbReference>
<dbReference type="FunFam" id="1.10.287.70:FF:000002">
    <property type="entry name" value="Potassium voltage-gated channel subfamily a member"/>
    <property type="match status" value="1"/>
</dbReference>
<dbReference type="FunFam" id="3.30.710.10:FF:000012">
    <property type="entry name" value="Potassium voltage-gated channel subfamily A member 10"/>
    <property type="match status" value="1"/>
</dbReference>
<dbReference type="FunFam" id="1.20.120.350:FF:000025">
    <property type="entry name" value="Potassium voltage-gated channel subfamily A member 2"/>
    <property type="match status" value="1"/>
</dbReference>
<dbReference type="Gene3D" id="1.10.287.70">
    <property type="match status" value="1"/>
</dbReference>
<dbReference type="Gene3D" id="3.30.710.10">
    <property type="entry name" value="Potassium Channel Kv1.1, Chain A"/>
    <property type="match status" value="1"/>
</dbReference>
<dbReference type="Gene3D" id="1.20.120.350">
    <property type="entry name" value="Voltage-gated potassium channels. Chain C"/>
    <property type="match status" value="1"/>
</dbReference>
<dbReference type="InterPro" id="IPR000210">
    <property type="entry name" value="BTB/POZ_dom"/>
</dbReference>
<dbReference type="InterPro" id="IPR005821">
    <property type="entry name" value="Ion_trans_dom"/>
</dbReference>
<dbReference type="InterPro" id="IPR003968">
    <property type="entry name" value="K_chnl_volt-dep_Kv"/>
</dbReference>
<dbReference type="InterPro" id="IPR003972">
    <property type="entry name" value="K_chnl_volt-dep_Kv1"/>
</dbReference>
<dbReference type="InterPro" id="IPR004052">
    <property type="entry name" value="K_chnl_volt-dep_Kv1.5"/>
</dbReference>
<dbReference type="InterPro" id="IPR011333">
    <property type="entry name" value="SKP1/BTB/POZ_sf"/>
</dbReference>
<dbReference type="InterPro" id="IPR003131">
    <property type="entry name" value="T1-type_BTB"/>
</dbReference>
<dbReference type="InterPro" id="IPR028325">
    <property type="entry name" value="VG_K_chnl"/>
</dbReference>
<dbReference type="InterPro" id="IPR027359">
    <property type="entry name" value="Volt_channel_dom_sf"/>
</dbReference>
<dbReference type="PANTHER" id="PTHR11537:SF250">
    <property type="entry name" value="POTASSIUM VOLTAGE-GATED CHANNEL SUBFAMILY A MEMBER 5"/>
    <property type="match status" value="1"/>
</dbReference>
<dbReference type="PANTHER" id="PTHR11537">
    <property type="entry name" value="VOLTAGE-GATED POTASSIUM CHANNEL"/>
    <property type="match status" value="1"/>
</dbReference>
<dbReference type="Pfam" id="PF02214">
    <property type="entry name" value="BTB_2"/>
    <property type="match status" value="1"/>
</dbReference>
<dbReference type="Pfam" id="PF00520">
    <property type="entry name" value="Ion_trans"/>
    <property type="match status" value="1"/>
</dbReference>
<dbReference type="PRINTS" id="PR00169">
    <property type="entry name" value="KCHANNEL"/>
</dbReference>
<dbReference type="PRINTS" id="PR01512">
    <property type="entry name" value="KV15CHANNEL"/>
</dbReference>
<dbReference type="PRINTS" id="PR01491">
    <property type="entry name" value="KVCHANNEL"/>
</dbReference>
<dbReference type="PRINTS" id="PR01496">
    <property type="entry name" value="SHAKERCHANEL"/>
</dbReference>
<dbReference type="SMART" id="SM00225">
    <property type="entry name" value="BTB"/>
    <property type="match status" value="1"/>
</dbReference>
<dbReference type="SUPFAM" id="SSF54695">
    <property type="entry name" value="POZ domain"/>
    <property type="match status" value="1"/>
</dbReference>
<dbReference type="SUPFAM" id="SSF81324">
    <property type="entry name" value="Voltage-gated potassium channels"/>
    <property type="match status" value="1"/>
</dbReference>
<reference key="1">
    <citation type="journal article" date="1991" name="FASEB J.">
        <title>Molecular cloning and characterization of two voltage-gated K+ channel cDNAs from human ventricle.</title>
        <authorList>
            <person name="Tamkun M.M."/>
            <person name="Knoth K.M."/>
            <person name="Walbridge J.A."/>
            <person name="Kroemer H."/>
            <person name="Roden D.M."/>
            <person name="Glover D.M."/>
        </authorList>
    </citation>
    <scope>NUCLEOTIDE SEQUENCE [MRNA] (ISOFORM 1)</scope>
    <source>
        <tissue>Heart</tissue>
    </source>
</reference>
<reference key="2">
    <citation type="journal article" date="1991" name="Proc. Natl. Acad. Sci. U.S.A.">
        <title>Sequence and functional expression in Xenopus oocytes of a human insulinoma and islet potassium channel.</title>
        <authorList>
            <person name="Philipson L.H."/>
            <person name="Hice R.E."/>
            <person name="Schaefer K."/>
            <person name="Lamendola J."/>
            <person name="Bell G.I."/>
            <person name="Nelson D.J."/>
            <person name="Steiner D.F."/>
        </authorList>
    </citation>
    <scope>NUCLEOTIDE SEQUENCE [MRNA] (ISOFORM 1)</scope>
    <source>
        <tissue>Insulinoma</tissue>
    </source>
</reference>
<reference key="3">
    <citation type="journal article" date="1992" name="Genomics">
        <title>Molecular cloning, characterization, and genomic localization of a human potassium channel gene.</title>
        <authorList>
            <person name="Curran M.E."/>
            <person name="Landes G.M."/>
            <person name="Keating M.T."/>
        </authorList>
    </citation>
    <scope>NUCLEOTIDE SEQUENCE [MRNA] (ISOFORM 1)</scope>
    <source>
        <tissue>Heart</tissue>
    </source>
</reference>
<reference key="4">
    <citation type="journal article" date="2004" name="Genome Res.">
        <title>The status, quality, and expansion of the NIH full-length cDNA project: the Mammalian Gene Collection (MGC).</title>
        <authorList>
            <consortium name="The MGC Project Team"/>
        </authorList>
    </citation>
    <scope>NUCLEOTIDE SEQUENCE [LARGE SCALE MRNA] (ISOFORM 1)</scope>
</reference>
<reference key="5">
    <citation type="journal article" date="1993" name="J. Gen. Physiol.">
        <title>A rapidly activating and slowly inactivating potassium channel cloned from human heart. Functional analysis after stable mammalian cell culture expression.</title>
        <authorList>
            <person name="Snyders D.J."/>
            <person name="Tamkun M.M."/>
            <person name="Bennett P.B."/>
        </authorList>
    </citation>
    <scope>FUNCTION</scope>
    <scope>SUBCELLULAR LOCATION</scope>
    <scope>TRANSPORTER ACTIVITY</scope>
</reference>
<reference key="6">
    <citation type="journal article" date="2001" name="J. Gen. Physiol.">
        <title>Altered state dependence of c-type inactivation in the long and short forms of human Kv1.5.</title>
        <authorList>
            <person name="Kurata H.T."/>
            <person name="Soon G.S."/>
            <person name="Fedida D."/>
        </authorList>
    </citation>
    <scope>FUNCTION (ISOFORM 2)</scope>
    <scope>ALTERNATIVE SPLICING (ISOFORMS 1 AND 2)</scope>
    <scope>TRANSPORTER ACTIVITY (ISOFORM 2)</scope>
</reference>
<reference key="7">
    <citation type="journal article" date="2002" name="J. Pharmacol. Exp. Ther.">
        <title>Modulation of the human Kv1.5 channel by protein kinase C activation: role of the Kvbeta1.2 subunit.</title>
        <authorList>
            <person name="Williams C.P."/>
            <person name="Hu N."/>
            <person name="Shen W."/>
            <person name="Mashburn A.B."/>
            <person name="Murray K.T."/>
        </authorList>
    </citation>
    <scope>FUNCTION</scope>
    <scope>SUBCELLULAR LOCATION</scope>
    <scope>INTERACTION WITH KCNAB1</scope>
    <scope>TRANSPORTER ACTIVITY</scope>
</reference>
<reference key="8">
    <citation type="journal article" date="2006" name="Biochem. Biophys. Res. Commun.">
        <title>A specific N-terminal residue in Kv1.5 is required for upregulation of the channel by SAP97.</title>
        <authorList>
            <person name="Mathur R."/>
            <person name="Choi W.S."/>
            <person name="Eldstrom J."/>
            <person name="Wang Z."/>
            <person name="Kim J."/>
            <person name="Steele D.F."/>
            <person name="Fedida D."/>
        </authorList>
    </citation>
    <scope>INTERACTION WITH DLG1</scope>
    <scope>MUTAGENESIS OF THR-15</scope>
</reference>
<reference key="9">
    <citation type="journal article" date="2006" name="Hum. Mol. Genet.">
        <title>Kv1.5 channelopathy due to KCNA5 loss-of-function mutation causes human atrial fibrillation.</title>
        <authorList>
            <person name="Olson T.M."/>
            <person name="Alekseev A.E."/>
            <person name="Liu X.K."/>
            <person name="Park S."/>
            <person name="Zingman L.V."/>
            <person name="Bienengraeber M."/>
            <person name="Sattiraju S."/>
            <person name="Ballew J.D."/>
            <person name="Jahangir A."/>
            <person name="Terzic A."/>
        </authorList>
    </citation>
    <scope>INVOLVEMENT IN ATFB7</scope>
</reference>
<reference key="10">
    <citation type="journal article" date="2007" name="Proc. Natl. Acad. Sci. U.S.A.">
        <title>SUMO modification regulates inactivation of the voltage-gated potassium channel Kv1.5.</title>
        <authorList>
            <person name="Benson M.D."/>
            <person name="Li Q.J."/>
            <person name="Kieckhafer K."/>
            <person name="Dudek D."/>
            <person name="Whorton M.R."/>
            <person name="Sunahara R.K."/>
            <person name="Iniguez-Lluhi J.A."/>
            <person name="Martens J.R."/>
        </authorList>
    </citation>
    <scope>SUMOYLATION AT LYS-221 AND LYS-536</scope>
    <scope>INTERACTION WITH UBE2I</scope>
    <scope>MUTAGENESIS OF ILE-220; LYS-221; LEU-535 AND LYS-536</scope>
</reference>
<reference key="11">
    <citation type="journal article" date="2006" name="Science">
        <title>The consensus coding sequences of human breast and colorectal cancers.</title>
        <authorList>
            <person name="Sjoeblom T."/>
            <person name="Jones S."/>
            <person name="Wood L.D."/>
            <person name="Parsons D.W."/>
            <person name="Lin J."/>
            <person name="Barber T.D."/>
            <person name="Mandelker D."/>
            <person name="Leary R.J."/>
            <person name="Ptak J."/>
            <person name="Silliman N."/>
            <person name="Szabo S."/>
            <person name="Buckhaults P."/>
            <person name="Farrell C."/>
            <person name="Meeh P."/>
            <person name="Markowitz S.D."/>
            <person name="Willis J."/>
            <person name="Dawson D."/>
            <person name="Willson J.K.V."/>
            <person name="Gazdar A.F."/>
            <person name="Hartigan J."/>
            <person name="Wu L."/>
            <person name="Liu C."/>
            <person name="Parmigiani G."/>
            <person name="Park B.H."/>
            <person name="Bachman K.E."/>
            <person name="Papadopoulos N."/>
            <person name="Vogelstein B."/>
            <person name="Kinzler K.W."/>
            <person name="Velculescu V.E."/>
        </authorList>
    </citation>
    <scope>VARIANT [LARGE SCALE ANALYSIS] SER-300</scope>
</reference>
<reference key="12">
    <citation type="journal article" date="2007" name="Am. J. Physiol.">
        <title>Function of Kv1.5 channels and genetic variations of KCNA5 in patients with idiopathic pulmonary arterial hypertension.</title>
        <authorList>
            <person name="Remillard C.V."/>
            <person name="Tigno D.D."/>
            <person name="Platoshyn O."/>
            <person name="Burg E.D."/>
            <person name="Brevnova E.E."/>
            <person name="Conger D."/>
            <person name="Nicholson A."/>
            <person name="Rana B.K."/>
            <person name="Channick R.N."/>
            <person name="Rubin L.J."/>
            <person name="O'connor D.T."/>
            <person name="Yuan J.X."/>
        </authorList>
    </citation>
    <scope>VARIANTS ARG-182 AND ASP-211</scope>
    <scope>FUNCTION</scope>
    <scope>TRANSPORTER ACTIVITY</scope>
    <scope>ACTIVITY REGULATION</scope>
</reference>
<reference key="13">
    <citation type="journal article" date="2010" name="Am. J. Physiol.">
        <title>Tetramerization domain mutations in KCNA5 affect channel kinetics and cause abnormal trafficking patterns.</title>
        <authorList>
            <person name="Burg E.D."/>
            <person name="Platoshyn O."/>
            <person name="Tsigelny I.F."/>
            <person name="Lozano-Ruiz B."/>
            <person name="Rana B.K."/>
            <person name="Yuan J.X."/>
        </authorList>
    </citation>
    <scope>CHARACTERIZATION OF VARIANTS ARG-182 AND ASP-211</scope>
    <scope>FUNCTION</scope>
    <scope>TRANSPORTER ACTIVITY</scope>
    <scope>ACTIVITY REGULATION</scope>
    <scope>SUBUNIT</scope>
    <scope>SUBCELLULAR LOCATION</scope>
    <scope>GLYCOSYLATION</scope>
    <scope>REGION TETRAMERIZATION DOMAIN</scope>
</reference>
<reference key="14">
    <citation type="journal article" date="2014" name="PLoS ONE">
        <title>Novel mutations in BMPR2, ACVRL1 and KCNA5 genes and hemodynamic parameters in patients with pulmonary arterial hypertension.</title>
        <authorList>
            <person name="Pousada G."/>
            <person name="Baloira A."/>
            <person name="Vilarino C."/>
            <person name="Cifrian J.M."/>
            <person name="Valverde D."/>
        </authorList>
    </citation>
    <scope>VARIANTS HIS-42; MET-85; PRO-114; ARG-170 AND PRO-184</scope>
</reference>
<reference key="15">
    <citation type="journal article" date="2020" name="Genes (Basel)">
        <title>Customized Massive Parallel Sequencing Panel for Diagnosis of Pulmonary Arterial Hypertension.</title>
        <authorList>
            <person name="Castano J.A.T."/>
            <person name="Hernandez-Gonzalez I."/>
            <person name="Gallego N."/>
            <person name="Perez-Olivares C."/>
            <person name="Ochoa Parra N."/>
            <person name="Arias P."/>
            <person name="Granda E."/>
            <person name="Acebo G.G."/>
            <person name="Lago-Docampo M."/>
            <person name="Palomino-Doza J."/>
            <person name="Lopez Meseguer M."/>
            <person name="Del Cerro M.J."/>
            <person name="Pah Consortium S."/>
            <person name="Valverde D."/>
            <person name="Lapunzina P."/>
            <person name="Escribano-Subias P."/>
        </authorList>
    </citation>
    <scope>VARIANTS ARG-182; LEU-287; PHE-356 AND ARG-384</scope>
</reference>
<reference key="16">
    <citation type="journal article" date="2023" name="Am. J. Respir. Cell Mol. Biol.">
        <title>Novel Loss-of-Function KCNA5 Variants in Pulmonary Arterial Hypertension.</title>
        <authorList>
            <consortium name="Spanish group of Ion Channels in Pulmonary Hypertension (SICPH) investigators"/>
            <person name="Vera-Zambrano A."/>
            <person name="Lago-Docampo M."/>
            <person name="Gallego N."/>
            <person name="Franco-Gonzalez J.F."/>
            <person name="Morales-Cano D."/>
            <person name="Cruz-Utrilla A."/>
            <person name="Villegas-Esguevillas M."/>
            <person name="Fernandez-Malave E."/>
            <person name="Escribano-Subias P."/>
            <person name="Tenorio-Castano J.A."/>
            <person name="Perez-Vizcaino F."/>
            <person name="Valverde D."/>
            <person name="Gonzalez T."/>
            <person name="Cogolludo A."/>
        </authorList>
    </citation>
    <scope>VARIANTS THR-226 AND SER-307</scope>
    <scope>CHARACTERIZATION OF VARIANTS ARG-170; ARG-184; THR-226; LEU-287; SER-307; PHE-356; ARG-384</scope>
    <scope>FUNCTION</scope>
    <scope>TRANSPORTER ACTIVITY</scope>
    <scope>GLYCOSYLATION</scope>
</reference>
<organism>
    <name type="scientific">Homo sapiens</name>
    <name type="common">Human</name>
    <dbReference type="NCBI Taxonomy" id="9606"/>
    <lineage>
        <taxon>Eukaryota</taxon>
        <taxon>Metazoa</taxon>
        <taxon>Chordata</taxon>
        <taxon>Craniata</taxon>
        <taxon>Vertebrata</taxon>
        <taxon>Euteleostomi</taxon>
        <taxon>Mammalia</taxon>
        <taxon>Eutheria</taxon>
        <taxon>Euarchontoglires</taxon>
        <taxon>Primates</taxon>
        <taxon>Haplorrhini</taxon>
        <taxon>Catarrhini</taxon>
        <taxon>Hominidae</taxon>
        <taxon>Homo</taxon>
    </lineage>
</organism>
<protein>
    <recommendedName>
        <fullName>Potassium voltage-gated channel subfamily A member 5</fullName>
    </recommendedName>
    <alternativeName>
        <fullName>HPCN1</fullName>
    </alternativeName>
    <alternativeName>
        <fullName>Voltage-gated potassium channel HK2</fullName>
    </alternativeName>
    <alternativeName>
        <fullName>Voltage-gated potassium channel subunit Kv1.5</fullName>
    </alternativeName>
</protein>
<feature type="chain" id="PRO_0000053985" description="Potassium voltage-gated channel subfamily A member 5">
    <location>
        <begin position="1"/>
        <end position="613"/>
    </location>
</feature>
<feature type="topological domain" description="Cytoplasmic" evidence="3">
    <location>
        <begin position="1"/>
        <end position="247"/>
    </location>
</feature>
<feature type="transmembrane region" description="Helical; Name=Segment S1" evidence="3">
    <location>
        <begin position="248"/>
        <end position="269"/>
    </location>
</feature>
<feature type="topological domain" description="Extracellular" evidence="3">
    <location>
        <begin position="270"/>
        <end position="323"/>
    </location>
</feature>
<feature type="transmembrane region" description="Helical; Name=Segment S2" evidence="3">
    <location>
        <begin position="324"/>
        <end position="345"/>
    </location>
</feature>
<feature type="topological domain" description="Cytoplasmic" evidence="3">
    <location>
        <begin position="346"/>
        <end position="356"/>
    </location>
</feature>
<feature type="transmembrane region" description="Helical; Name=Segment S3" evidence="3">
    <location>
        <begin position="357"/>
        <end position="377"/>
    </location>
</feature>
<feature type="topological domain" description="Extracellular" evidence="3">
    <location>
        <begin position="378"/>
        <end position="395"/>
    </location>
</feature>
<feature type="transmembrane region" description="Helical; Voltage-sensor; Name=Segment S4" evidence="3">
    <location>
        <begin position="396"/>
        <end position="416"/>
    </location>
</feature>
<feature type="topological domain" description="Cytoplasmic" evidence="3">
    <location>
        <begin position="417"/>
        <end position="431"/>
    </location>
</feature>
<feature type="transmembrane region" description="Helical; Name=Segment S5" evidence="3">
    <location>
        <begin position="432"/>
        <end position="453"/>
    </location>
</feature>
<feature type="topological domain" description="Extracellular" evidence="3">
    <location>
        <begin position="454"/>
        <end position="467"/>
    </location>
</feature>
<feature type="intramembrane region" description="Helical; Name=Pore helix" evidence="3">
    <location>
        <begin position="468"/>
        <end position="479"/>
    </location>
</feature>
<feature type="intramembrane region" evidence="3">
    <location>
        <begin position="480"/>
        <end position="487"/>
    </location>
</feature>
<feature type="topological domain" description="Extracellular" evidence="3">
    <location>
        <begin position="488"/>
        <end position="494"/>
    </location>
</feature>
<feature type="transmembrane region" description="Helical; Name=Segment S6" evidence="3">
    <location>
        <begin position="495"/>
        <end position="523"/>
    </location>
</feature>
<feature type="topological domain" description="Cytoplasmic" evidence="3">
    <location>
        <begin position="524"/>
        <end position="613"/>
    </location>
</feature>
<feature type="repeat" description="1">
    <location>
        <begin position="61"/>
        <end position="71"/>
    </location>
</feature>
<feature type="repeat" description="2">
    <location>
        <begin position="72"/>
        <end position="82"/>
    </location>
</feature>
<feature type="region of interest" description="Tetramerization domain" evidence="20">
    <location>
        <begin position="1"/>
        <end position="211"/>
    </location>
</feature>
<feature type="region of interest" description="Disordered" evidence="6">
    <location>
        <begin position="1"/>
        <end position="108"/>
    </location>
</feature>
<feature type="region of interest" description="2 X 11 AA tandem repeat of D-[SP]-G-V-R-P-L-P-P-L-P">
    <location>
        <begin position="61"/>
        <end position="82"/>
    </location>
</feature>
<feature type="region of interest" description="Disordered" evidence="6">
    <location>
        <begin position="282"/>
        <end position="304"/>
    </location>
</feature>
<feature type="region of interest" description="S4-S5 linker" evidence="3">
    <location>
        <begin position="418"/>
        <end position="431"/>
    </location>
</feature>
<feature type="region of interest" description="Disordered" evidence="6">
    <location>
        <begin position="532"/>
        <end position="559"/>
    </location>
</feature>
<feature type="short sequence motif" description="Selectivity filter" evidence="3">
    <location>
        <begin position="480"/>
        <end position="485"/>
    </location>
</feature>
<feature type="short sequence motif" description="PDZ-binding" evidence="1">
    <location>
        <begin position="611"/>
        <end position="613"/>
    </location>
</feature>
<feature type="compositionally biased region" description="Basic and acidic residues" evidence="6">
    <location>
        <begin position="45"/>
        <end position="62"/>
    </location>
</feature>
<feature type="compositionally biased region" description="Pro residues" evidence="6">
    <location>
        <begin position="66"/>
        <end position="83"/>
    </location>
</feature>
<feature type="compositionally biased region" description="Basic and acidic residues" evidence="6">
    <location>
        <begin position="84"/>
        <end position="93"/>
    </location>
</feature>
<feature type="compositionally biased region" description="Pro residues" evidence="6">
    <location>
        <begin position="285"/>
        <end position="295"/>
    </location>
</feature>
<feature type="modified residue" description="Phosphoserine; by PKA" evidence="5">
    <location>
        <position position="557"/>
    </location>
</feature>
<feature type="lipid moiety-binding region" description="S-palmitoyl cysteine" evidence="5">
    <location>
        <position position="346"/>
    </location>
</feature>
<feature type="cross-link" description="Glycyl lysine isopeptide (Lys-Gly) (interchain with G-Cter in SUMO)" evidence="12">
    <location>
        <position position="221"/>
    </location>
</feature>
<feature type="cross-link" description="Glycyl lysine isopeptide (Lys-Gly) (interchain with G-Cter in SUMO)" evidence="12">
    <location>
        <position position="536"/>
    </location>
</feature>
<feature type="splice variant" id="VSP_037110" description="In isoform 2." evidence="19">
    <location>
        <begin position="1"/>
        <end position="209"/>
    </location>
</feature>
<feature type="sequence variant" id="VAR_079602" description="Found in a patient with pulmonary arterial hypertension; uncertain significance." evidence="15">
    <original>L</original>
    <variation>H</variation>
    <location>
        <position position="42"/>
    </location>
</feature>
<feature type="sequence variant" id="VAR_079603" description="In dbSNP:rs1479838157." evidence="15">
    <original>L</original>
    <variation>M</variation>
    <location>
        <position position="85"/>
    </location>
</feature>
<feature type="sequence variant" id="VAR_079604" description="Found in a patient with pulmonary arterial hypertension; uncertain significance." evidence="15">
    <original>T</original>
    <variation>P</variation>
    <location>
        <position position="114"/>
    </location>
</feature>
<feature type="sequence variant" id="VAR_079605" description="Found in a patient with pulmonary arterial hypertension; uncertain significance; no effect on channel activity." evidence="15 17">
    <original>P</original>
    <variation>R</variation>
    <location>
        <position position="170"/>
    </location>
</feature>
<feature type="sequence variant" id="VAR_089522" description="Found in a patient with pulmonary arterial hypertension; uncertain significance; affects channel inactivation kinetics resulting in faster voltage-dependent inactivation; results in incomplete processing and reduced abundance of the mature glycosylated protein; reduced expression of the mature protein on the cell surface; dbSNP:rs755408841." evidence="13 14 16">
    <original>G</original>
    <variation>R</variation>
    <location>
        <position position="182"/>
    </location>
</feature>
<feature type="sequence variant" id="VAR_079606" description="Found in a patient with pulmonary arterial hypertension; uncertain significance; significant reduction in channel activity; affects processing resulting in reduced abundance of the mature glycosylated protein." evidence="15 17">
    <original>R</original>
    <variation>P</variation>
    <location>
        <position position="184"/>
    </location>
</feature>
<feature type="sequence variant" id="VAR_089523" description="Found in a patient with pulmonary arterial hypertension; uncertain significance; no effect on channel activity; no effect on protein processing; dbSNP:rs35853292." evidence="13 14">
    <original>E</original>
    <variation>D</variation>
    <location>
        <position position="211"/>
    </location>
</feature>
<feature type="sequence variant" id="VAR_089524" description="Found in a patient with pulmonary arterial hypertension; uncertain significance; no effect on channel activity." evidence="17">
    <original>P</original>
    <variation>T</variation>
    <location>
        <position position="226"/>
    </location>
</feature>
<feature type="sequence variant" id="VAR_053856" description="In dbSNP:rs1056464.">
    <original>P</original>
    <variation>S</variation>
    <location>
        <position position="228"/>
    </location>
</feature>
<feature type="sequence variant" id="VAR_089525" description="Found in a patient with pulmonary arterial hypertension; uncertain significance; no effect on channel activity; requires 2 nucleotide substitutions; dbSNP:rs1565465582." evidence="16 17">
    <original>A</original>
    <variation>L</variation>
    <location>
        <position position="287"/>
    </location>
</feature>
<feature type="sequence variant" id="VAR_035770" description="In a breast cancer sample; somatic mutation; dbSNP:rs148708451." evidence="11">
    <original>G</original>
    <variation>S</variation>
    <location>
        <position position="300"/>
    </location>
</feature>
<feature type="sequence variant" id="VAR_089526" description="Found in a patient with pulmonary arterial hypertension; uncertain significance; no effect on channel activity; dbSNP:rs17215409." evidence="17">
    <original>P</original>
    <variation>S</variation>
    <location>
        <position position="307"/>
    </location>
</feature>
<feature type="sequence variant" id="VAR_089527" description="Found in a patient with pulmonary arterial hypertension; uncertain significance; no effect on channel activity." evidence="16 17">
    <original>I</original>
    <variation>F</variation>
    <location>
        <position position="356"/>
    </location>
</feature>
<feature type="sequence variant" id="VAR_089528" description="Found in a patient with pulmonary arterial hypertension; uncertain significance; significant reduction in channel activity; dbSNP:rs76708779." evidence="16 17">
    <original>G</original>
    <variation>R</variation>
    <location>
        <position position="384"/>
    </location>
</feature>
<feature type="sequence variant" id="VAR_054786" description="In dbSNP:rs12720445.">
    <original>R</original>
    <variation>K</variation>
    <location>
        <position position="578"/>
    </location>
</feature>
<feature type="mutagenesis site" description="Loss of DLG1 effect on channel current." evidence="9">
    <original>T</original>
    <variation>A</variation>
    <location>
        <position position="15"/>
    </location>
</feature>
<feature type="mutagenesis site" description="Reduces sumoylation; when associated with N-535." evidence="12">
    <original>I</original>
    <variation>N</variation>
    <location>
        <position position="220"/>
    </location>
</feature>
<feature type="mutagenesis site" description="Abolishes sumoylation; when associated with R-536." evidence="12">
    <original>K</original>
    <variation>R</variation>
    <location>
        <position position="221"/>
    </location>
</feature>
<feature type="mutagenesis site" description="Reduces sumoylation; when associated with N-220." evidence="12">
    <original>L</original>
    <variation>N</variation>
    <location>
        <position position="535"/>
    </location>
</feature>
<feature type="mutagenesis site" description="Abolishes sumoylation; when associated with R-221." evidence="12">
    <original>K</original>
    <variation>R</variation>
    <location>
        <position position="536"/>
    </location>
</feature>
<feature type="sequence conflict" description="In Ref. 1; AAA61276." evidence="19" ref="1">
    <location>
        <position position="55"/>
    </location>
</feature>
<feature type="sequence conflict" description="In Ref. 2; AAA36422." evidence="19" ref="2">
    <original>L</original>
    <variation>Q</variation>
    <location>
        <position position="138"/>
    </location>
</feature>
<feature type="sequence conflict" description="In Ref. 1; AAA61276 and 2; AAA36422." evidence="19" ref="1 2">
    <original>R</original>
    <variation>P</variation>
    <location>
        <position position="154"/>
    </location>
</feature>
<feature type="sequence conflict" description="In Ref. 1; AAA61276." evidence="19" ref="1">
    <original>RP</original>
    <variation>G</variation>
    <location>
        <begin position="187"/>
        <end position="188"/>
    </location>
</feature>
<feature type="sequence conflict" description="In Ref. 2; AAA36422." evidence="19" ref="2">
    <original>R</original>
    <variation>G</variation>
    <location>
        <position position="214"/>
    </location>
</feature>
<feature type="sequence conflict" description="In Ref. 2; AAA36422." evidence="19" ref="2">
    <original>P</original>
    <variation>V</variation>
    <location>
        <position position="228"/>
    </location>
</feature>
<feature type="sequence conflict" description="In Ref. 3; AAA60146." evidence="19" ref="3">
    <original>L</original>
    <variation>V</variation>
    <location>
        <position position="282"/>
    </location>
</feature>
<feature type="sequence conflict" description="In Ref. 1; AAA61276." evidence="19" ref="1">
    <original>P</original>
    <variation>A</variation>
    <location>
        <position position="307"/>
    </location>
</feature>
<accession>P22460</accession>
<accession>Q4KKT8</accession>
<accession>Q4VAJ1</accession>
<accession>Q4VAJ2</accession>
<accession>Q9UDA4</accession>
<name>KCNA5_HUMAN</name>
<sequence>MEIALVPLENGGAMTVRGGDEARAGCGQATGGELQCPPTAGLSDGPKEPAPKGRGAQRDADSGVRPLPPLPDPGVRPLPPLPEELPRPRRPPPEDEEEEGDPGLGTVEDQALGTASLHHQRVHINISGLRFETQLGTLAQFPNTLLGDPAKRLRYFDPLRNEYFFDRNRPSFDGILYYYQSGGRLRRPVNVSLDVFADEIRFYQLGDEAMERFREDEGFIKEEEKPLPRNEFQRQVWLIFEYPESSGSARAIAIVSVLVILISIITFCLETLPEFRDERELLRHPPAPHQPPAPAPGANGSGVMAPPSGPTVAPLLPRTLADPFFIVETTCVIWFTFELLVRFFACPSKAGFSRNIMNIIDVVAIFPYFITLGTELAEQQPGGGGGGQNGQQAMSLAILRVIRLVRVFRIFKLSRHSKGLQILGKTLQASMRELGLLIFFLFIGVILFSSAVYFAEADNQGTHFSSIPDAFWWAVVTMTTVGYGDMRPITVGGKIVGSLCAIAGVLTIALPVPVIVSNFNYFYHRETDHEEPAVLKEEQGTQSQGPGLDRGVQRKVSGSRGSFCKAGGTLENADSARRGSCPLEKCNVKAKSNVDLRRSLYALCLDTSRETDL</sequence>
<comment type="function">
    <text evidence="4 8 13 14 17 18">Voltage-gated potassium channel that mediates transmembrane potassium transport in excitable membranes. Forms tetrameric potassium-selective channels through which potassium ions pass in accordance with their electrochemical gradient. The channel alternates between opened and closed conformations in response to the voltage difference across the membrane. Can form functional homotetrameric channels and heterotetrameric channels that contain variable proportions of KCNA1, KCNA2, KCNA4, KCNA5, and possibly other family members as well; channel properties depend on the type of alpha subunits that are part of the channel (PubMed:12130714). Channel properties are modulated by cytoplasmic beta subunits that regulate the subcellular location of the alpha subunits and promote rapid inactivation (PubMed:12130714). Homotetrameric channels display rapid activation and slow inactivation (PubMed:12130714, PubMed:8505626). Required for normal electrical conduction including formation of the infranodal ventricular conduction system and normal action potential configuration, as a result of its interaction with XIRP2 (By similarity). May play a role in regulating the secretion of insulin in normal pancreatic islets.</text>
</comment>
<comment type="function">
    <molecule>Isoform 2</molecule>
    <text evidence="7">Exhibits a faster depolarization rate, reduced voltage-dependent recovery from inactivation and an excessive cumulative inactivation.</text>
</comment>
<comment type="catalytic activity">
    <reaction evidence="8 13 14 17 18">
        <text>K(+)(in) = K(+)(out)</text>
        <dbReference type="Rhea" id="RHEA:29463"/>
        <dbReference type="ChEBI" id="CHEBI:29103"/>
    </reaction>
</comment>
<comment type="catalytic activity">
    <molecule>Isoform 2</molecule>
    <reaction evidence="7">
        <text>K(+)(in) = K(+)(out)</text>
        <dbReference type="Rhea" id="RHEA:29463"/>
        <dbReference type="ChEBI" id="CHEBI:29103"/>
    </reaction>
</comment>
<comment type="activity regulation">
    <text evidence="13 14">Inhibited by 4-aminopyridine, nicotine, bepridil, correolide, and endothelin-1.</text>
</comment>
<comment type="subunit">
    <text evidence="2 4 7 8 9 12 18 20">Homotetramer and heterotetramer of potassium channel proteins (PubMed:20018952). Interacts with DLG1, which enhances channel currents. Forms a ternary complex with DLG1 and CAV3 (By similarity). Interacts with KCNAB1 (PubMed:12130714). Interacts with UBE2I (PubMed:17261810). Interacts with XIRP2; the interaction is required for normal action potential configuration in the heart (By similarity).</text>
</comment>
<comment type="interaction">
    <interactant intactId="EBI-6426121">
        <id>P22460</id>
    </interactant>
    <interactant intactId="EBI-77797">
        <id>P35609</id>
        <label>ACTN2</label>
    </interactant>
    <organismsDiffer>false</organismsDiffer>
    <experiments>6</experiments>
</comment>
<comment type="interaction">
    <interactant intactId="EBI-6426121">
        <id>P22460</id>
    </interactant>
    <interactant intactId="EBI-357345">
        <id>Q14160</id>
        <label>SCRIB</label>
    </interactant>
    <organismsDiffer>false</organismsDiffer>
    <experiments>2</experiments>
</comment>
<comment type="interaction">
    <interactant intactId="EBI-6426121">
        <id>P22460</id>
    </interactant>
    <interactant intactId="EBI-12845616">
        <id>Q6UX40</id>
        <label>TMEM107</label>
    </interactant>
    <organismsDiffer>false</organismsDiffer>
    <experiments>3</experiments>
</comment>
<comment type="subcellular location">
    <subcellularLocation>
        <location evidence="8 14 18">Cell membrane</location>
        <topology evidence="5">Multi-pass membrane protein</topology>
    </subcellularLocation>
</comment>
<comment type="alternative products">
    <event type="alternative splicing"/>
    <isoform>
        <id>P22460-1</id>
        <name>1</name>
        <sequence type="displayed"/>
    </isoform>
    <isoform>
        <id>P22460-2</id>
        <name>2</name>
        <name>Short</name>
        <sequence type="described" ref="VSP_037110"/>
    </isoform>
</comment>
<comment type="tissue specificity">
    <text>Pancreatic islets and insulinoma.</text>
</comment>
<comment type="domain">
    <text>The amino terminus may be important in determining the rate of inactivation of the channel while the C-terminal PDZ-binding motif may play a role in modulation of channel activity and/or targeting of the channel to specific subcellular compartments.</text>
</comment>
<comment type="domain">
    <text evidence="3">The transmembrane segment S4 functions as a voltage-sensor and is characterized by a series of positively charged amino acids at every third position. Channel opening and closing is effected by a conformation change that affects the position and orientation of the voltage-sensor paddle formed by S3 and S4 within the membrane. A transmembrane electric field that is positive inside would push the positively charged S4 segment outwards, thereby opening the pore, while a field that is negative inside would pull the S4 segment inwards and close the pore. Changes in the position and orientation of S4 are then transmitted to the activation gate formed by the inner helix bundle via the S4-S5 linker region.</text>
</comment>
<comment type="PTM">
    <text evidence="14 17">Glycosylated.</text>
</comment>
<comment type="PTM">
    <text evidence="12">Sumoylated on Lys-221, and Lys-536, preferentially with SUMO3. Sumoylation regulates the voltage sensitivity of the channel.</text>
</comment>
<comment type="disease" evidence="10">
    <disease id="DI-00149">
        <name>Atrial fibrillation, familial, 7</name>
        <acronym>ATFB7</acronym>
        <description>A familial form of atrial fibrillation, a common sustained cardiac rhythm disturbance. Atrial fibrillation is characterized by disorganized atrial electrical activity and ineffective atrial contraction promoting blood stasis in the atria and reduces ventricular filling. It can result in palpitations, syncope, thromboembolic stroke, and congestive heart failure.</description>
        <dbReference type="MIM" id="612240"/>
    </disease>
    <text>The disease is caused by variants affecting the gene represented in this entry.</text>
</comment>
<comment type="similarity">
    <text evidence="19">Belongs to the potassium channel family. A (Shaker) (TC 1.A.1.2) subfamily. Kv1.5/KCNA5 sub-subfamily.</text>
</comment>
<comment type="sequence caution" evidence="19">
    <conflict type="frameshift">
        <sequence resource="EMBL-CDS" id="AAA60146"/>
    </conflict>
</comment>
<keyword id="KW-0025">Alternative splicing</keyword>
<keyword id="KW-1020">Atrial fibrillation</keyword>
<keyword id="KW-1003">Cell membrane</keyword>
<keyword id="KW-0407">Ion channel</keyword>
<keyword id="KW-0406">Ion transport</keyword>
<keyword id="KW-1017">Isopeptide bond</keyword>
<keyword id="KW-0449">Lipoprotein</keyword>
<keyword id="KW-0472">Membrane</keyword>
<keyword id="KW-0564">Palmitate</keyword>
<keyword id="KW-0597">Phosphoprotein</keyword>
<keyword id="KW-0630">Potassium</keyword>
<keyword id="KW-0631">Potassium channel</keyword>
<keyword id="KW-0633">Potassium transport</keyword>
<keyword id="KW-1267">Proteomics identification</keyword>
<keyword id="KW-1185">Reference proteome</keyword>
<keyword id="KW-0677">Repeat</keyword>
<keyword id="KW-0812">Transmembrane</keyword>
<keyword id="KW-1133">Transmembrane helix</keyword>
<keyword id="KW-0813">Transport</keyword>
<keyword id="KW-0832">Ubl conjugation</keyword>
<keyword id="KW-0851">Voltage-gated channel</keyword>
<proteinExistence type="evidence at protein level"/>
<evidence type="ECO:0000250" key="1"/>
<evidence type="ECO:0000250" key="2">
    <source>
        <dbReference type="UniProtKB" id="P19024"/>
    </source>
</evidence>
<evidence type="ECO:0000250" key="3">
    <source>
        <dbReference type="UniProtKB" id="P63142"/>
    </source>
</evidence>
<evidence type="ECO:0000250" key="4">
    <source>
        <dbReference type="UniProtKB" id="Q61762"/>
    </source>
</evidence>
<evidence type="ECO:0000255" key="5"/>
<evidence type="ECO:0000256" key="6">
    <source>
        <dbReference type="SAM" id="MobiDB-lite"/>
    </source>
</evidence>
<evidence type="ECO:0000269" key="7">
    <source>
    </source>
</evidence>
<evidence type="ECO:0000269" key="8">
    <source>
    </source>
</evidence>
<evidence type="ECO:0000269" key="9">
    <source>
    </source>
</evidence>
<evidence type="ECO:0000269" key="10">
    <source>
    </source>
</evidence>
<evidence type="ECO:0000269" key="11">
    <source>
    </source>
</evidence>
<evidence type="ECO:0000269" key="12">
    <source>
    </source>
</evidence>
<evidence type="ECO:0000269" key="13">
    <source>
    </source>
</evidence>
<evidence type="ECO:0000269" key="14">
    <source>
    </source>
</evidence>
<evidence type="ECO:0000269" key="15">
    <source>
    </source>
</evidence>
<evidence type="ECO:0000269" key="16">
    <source>
    </source>
</evidence>
<evidence type="ECO:0000269" key="17">
    <source>
    </source>
</evidence>
<evidence type="ECO:0000269" key="18">
    <source>
    </source>
</evidence>
<evidence type="ECO:0000305" key="19"/>
<evidence type="ECO:0000305" key="20">
    <source>
    </source>
</evidence>
<gene>
    <name type="primary">KCNA5</name>
</gene>